<proteinExistence type="inferred from homology"/>
<name>MUTS_STRU0</name>
<dbReference type="EMBL" id="AM946015">
    <property type="protein sequence ID" value="CAR43783.1"/>
    <property type="molecule type" value="Genomic_DNA"/>
</dbReference>
<dbReference type="RefSeq" id="WP_015912076.1">
    <property type="nucleotide sequence ID" value="NC_012004.1"/>
</dbReference>
<dbReference type="SMR" id="B9DW73"/>
<dbReference type="STRING" id="218495.SUB1786"/>
<dbReference type="GeneID" id="93827104"/>
<dbReference type="KEGG" id="sub:SUB1786"/>
<dbReference type="eggNOG" id="COG0249">
    <property type="taxonomic scope" value="Bacteria"/>
</dbReference>
<dbReference type="HOGENOM" id="CLU_002472_4_0_9"/>
<dbReference type="OrthoDB" id="9802448at2"/>
<dbReference type="Proteomes" id="UP000000449">
    <property type="component" value="Chromosome"/>
</dbReference>
<dbReference type="GO" id="GO:0005829">
    <property type="term" value="C:cytosol"/>
    <property type="evidence" value="ECO:0007669"/>
    <property type="project" value="TreeGrafter"/>
</dbReference>
<dbReference type="GO" id="GO:0005524">
    <property type="term" value="F:ATP binding"/>
    <property type="evidence" value="ECO:0007669"/>
    <property type="project" value="UniProtKB-UniRule"/>
</dbReference>
<dbReference type="GO" id="GO:0140664">
    <property type="term" value="F:ATP-dependent DNA damage sensor activity"/>
    <property type="evidence" value="ECO:0007669"/>
    <property type="project" value="InterPro"/>
</dbReference>
<dbReference type="GO" id="GO:0003684">
    <property type="term" value="F:damaged DNA binding"/>
    <property type="evidence" value="ECO:0007669"/>
    <property type="project" value="UniProtKB-UniRule"/>
</dbReference>
<dbReference type="GO" id="GO:0030983">
    <property type="term" value="F:mismatched DNA binding"/>
    <property type="evidence" value="ECO:0007669"/>
    <property type="project" value="InterPro"/>
</dbReference>
<dbReference type="GO" id="GO:0006298">
    <property type="term" value="P:mismatch repair"/>
    <property type="evidence" value="ECO:0007669"/>
    <property type="project" value="UniProtKB-UniRule"/>
</dbReference>
<dbReference type="FunFam" id="1.10.1420.10:FF:000001">
    <property type="entry name" value="DNA mismatch repair protein MutS"/>
    <property type="match status" value="1"/>
</dbReference>
<dbReference type="FunFam" id="3.40.1170.10:FF:000001">
    <property type="entry name" value="DNA mismatch repair protein MutS"/>
    <property type="match status" value="1"/>
</dbReference>
<dbReference type="FunFam" id="3.40.50.300:FF:000896">
    <property type="entry name" value="DNA mismatch repair protein MutS"/>
    <property type="match status" value="1"/>
</dbReference>
<dbReference type="Gene3D" id="1.10.1420.10">
    <property type="match status" value="2"/>
</dbReference>
<dbReference type="Gene3D" id="3.40.1170.10">
    <property type="entry name" value="DNA repair protein MutS, domain I"/>
    <property type="match status" value="1"/>
</dbReference>
<dbReference type="Gene3D" id="3.30.420.110">
    <property type="entry name" value="MutS, connector domain"/>
    <property type="match status" value="1"/>
</dbReference>
<dbReference type="Gene3D" id="3.40.50.300">
    <property type="entry name" value="P-loop containing nucleotide triphosphate hydrolases"/>
    <property type="match status" value="1"/>
</dbReference>
<dbReference type="HAMAP" id="MF_00096">
    <property type="entry name" value="MutS"/>
    <property type="match status" value="1"/>
</dbReference>
<dbReference type="InterPro" id="IPR005748">
    <property type="entry name" value="DNA_mismatch_repair_MutS"/>
</dbReference>
<dbReference type="InterPro" id="IPR007695">
    <property type="entry name" value="DNA_mismatch_repair_MutS-lik_N"/>
</dbReference>
<dbReference type="InterPro" id="IPR017261">
    <property type="entry name" value="DNA_mismatch_repair_MutS/MSH"/>
</dbReference>
<dbReference type="InterPro" id="IPR000432">
    <property type="entry name" value="DNA_mismatch_repair_MutS_C"/>
</dbReference>
<dbReference type="InterPro" id="IPR007861">
    <property type="entry name" value="DNA_mismatch_repair_MutS_clamp"/>
</dbReference>
<dbReference type="InterPro" id="IPR007696">
    <property type="entry name" value="DNA_mismatch_repair_MutS_core"/>
</dbReference>
<dbReference type="InterPro" id="IPR016151">
    <property type="entry name" value="DNA_mismatch_repair_MutS_N"/>
</dbReference>
<dbReference type="InterPro" id="IPR036187">
    <property type="entry name" value="DNA_mismatch_repair_MutS_sf"/>
</dbReference>
<dbReference type="InterPro" id="IPR007860">
    <property type="entry name" value="DNA_mmatch_repair_MutS_con_dom"/>
</dbReference>
<dbReference type="InterPro" id="IPR045076">
    <property type="entry name" value="MutS"/>
</dbReference>
<dbReference type="InterPro" id="IPR036678">
    <property type="entry name" value="MutS_con_dom_sf"/>
</dbReference>
<dbReference type="InterPro" id="IPR027417">
    <property type="entry name" value="P-loop_NTPase"/>
</dbReference>
<dbReference type="NCBIfam" id="TIGR01070">
    <property type="entry name" value="mutS1"/>
    <property type="match status" value="1"/>
</dbReference>
<dbReference type="NCBIfam" id="NF003810">
    <property type="entry name" value="PRK05399.1"/>
    <property type="match status" value="1"/>
</dbReference>
<dbReference type="PANTHER" id="PTHR11361:SF34">
    <property type="entry name" value="DNA MISMATCH REPAIR PROTEIN MSH1, MITOCHONDRIAL"/>
    <property type="match status" value="1"/>
</dbReference>
<dbReference type="PANTHER" id="PTHR11361">
    <property type="entry name" value="DNA MISMATCH REPAIR PROTEIN MUTS FAMILY MEMBER"/>
    <property type="match status" value="1"/>
</dbReference>
<dbReference type="Pfam" id="PF01624">
    <property type="entry name" value="MutS_I"/>
    <property type="match status" value="1"/>
</dbReference>
<dbReference type="Pfam" id="PF05188">
    <property type="entry name" value="MutS_II"/>
    <property type="match status" value="1"/>
</dbReference>
<dbReference type="Pfam" id="PF05192">
    <property type="entry name" value="MutS_III"/>
    <property type="match status" value="1"/>
</dbReference>
<dbReference type="Pfam" id="PF05190">
    <property type="entry name" value="MutS_IV"/>
    <property type="match status" value="1"/>
</dbReference>
<dbReference type="Pfam" id="PF00488">
    <property type="entry name" value="MutS_V"/>
    <property type="match status" value="1"/>
</dbReference>
<dbReference type="PIRSF" id="PIRSF037677">
    <property type="entry name" value="DNA_mis_repair_Msh6"/>
    <property type="match status" value="1"/>
</dbReference>
<dbReference type="SMART" id="SM00534">
    <property type="entry name" value="MUTSac"/>
    <property type="match status" value="1"/>
</dbReference>
<dbReference type="SMART" id="SM00533">
    <property type="entry name" value="MUTSd"/>
    <property type="match status" value="1"/>
</dbReference>
<dbReference type="SUPFAM" id="SSF55271">
    <property type="entry name" value="DNA repair protein MutS, domain I"/>
    <property type="match status" value="1"/>
</dbReference>
<dbReference type="SUPFAM" id="SSF53150">
    <property type="entry name" value="DNA repair protein MutS, domain II"/>
    <property type="match status" value="1"/>
</dbReference>
<dbReference type="SUPFAM" id="SSF48334">
    <property type="entry name" value="DNA repair protein MutS, domain III"/>
    <property type="match status" value="1"/>
</dbReference>
<dbReference type="SUPFAM" id="SSF52540">
    <property type="entry name" value="P-loop containing nucleoside triphosphate hydrolases"/>
    <property type="match status" value="1"/>
</dbReference>
<dbReference type="PROSITE" id="PS00486">
    <property type="entry name" value="DNA_MISMATCH_REPAIR_2"/>
    <property type="match status" value="1"/>
</dbReference>
<feature type="chain" id="PRO_1000192208" description="DNA mismatch repair protein MutS">
    <location>
        <begin position="1"/>
        <end position="847"/>
    </location>
</feature>
<feature type="binding site" evidence="1">
    <location>
        <begin position="602"/>
        <end position="609"/>
    </location>
    <ligand>
        <name>ATP</name>
        <dbReference type="ChEBI" id="CHEBI:30616"/>
    </ligand>
</feature>
<gene>
    <name evidence="1" type="primary">mutS</name>
    <name type="ordered locus">SUB1786</name>
</gene>
<protein>
    <recommendedName>
        <fullName evidence="1">DNA mismatch repair protein MutS</fullName>
    </recommendedName>
</protein>
<organism>
    <name type="scientific">Streptococcus uberis (strain ATCC BAA-854 / 0140J)</name>
    <dbReference type="NCBI Taxonomy" id="218495"/>
    <lineage>
        <taxon>Bacteria</taxon>
        <taxon>Bacillati</taxon>
        <taxon>Bacillota</taxon>
        <taxon>Bacilli</taxon>
        <taxon>Lactobacillales</taxon>
        <taxon>Streptococcaceae</taxon>
        <taxon>Streptococcus</taxon>
    </lineage>
</organism>
<comment type="function">
    <text evidence="1">This protein is involved in the repair of mismatches in DNA. It is possible that it carries out the mismatch recognition step. This protein has a weak ATPase activity.</text>
</comment>
<comment type="similarity">
    <text evidence="1">Belongs to the DNA mismatch repair MutS family.</text>
</comment>
<reference key="1">
    <citation type="journal article" date="2009" name="BMC Genomics">
        <title>Evidence for niche adaptation in the genome of the bovine pathogen Streptococcus uberis.</title>
        <authorList>
            <person name="Ward P.N."/>
            <person name="Holden M.T.G."/>
            <person name="Leigh J.A."/>
            <person name="Lennard N."/>
            <person name="Bignell A."/>
            <person name="Barron A."/>
            <person name="Clark L."/>
            <person name="Quail M.A."/>
            <person name="Woodward J."/>
            <person name="Barrell B.G."/>
            <person name="Egan S.A."/>
            <person name="Field T.R."/>
            <person name="Maskell D."/>
            <person name="Kehoe M."/>
            <person name="Dowson C.G."/>
            <person name="Chanter N."/>
            <person name="Whatmore A.M."/>
            <person name="Bentley S.D."/>
            <person name="Parkhill J."/>
        </authorList>
    </citation>
    <scope>NUCLEOTIDE SEQUENCE [LARGE SCALE GENOMIC DNA]</scope>
    <source>
        <strain>ATCC BAA-854 / 0140J</strain>
    </source>
</reference>
<keyword id="KW-0067">ATP-binding</keyword>
<keyword id="KW-0227">DNA damage</keyword>
<keyword id="KW-0234">DNA repair</keyword>
<keyword id="KW-0238">DNA-binding</keyword>
<keyword id="KW-0547">Nucleotide-binding</keyword>
<keyword id="KW-1185">Reference proteome</keyword>
<evidence type="ECO:0000255" key="1">
    <source>
        <dbReference type="HAMAP-Rule" id="MF_00096"/>
    </source>
</evidence>
<accession>B9DW73</accession>
<sequence length="847" mass="95398">MADSKISPGMQQYLDIKAQYPDAFLLFRMGDFYELFYDDAVKAAQLLEIGLTSRNKNAENPIPMAGVPHHSAQQYIDILIELGYKVAIAEQMEDPKKAVGVVKREVVQVITPGTVVDSAKPNSSNNFLIAIDFDGSHYGLSYMDLVTGEFFATTLSDFMSVCGEILNLKAKEVVIGFEITAEQEEQLQKQFRLLLSYEQEIYTDDTLINPNLSQVEKNVAGKLLQYVHQTQMRELSHLQELIHYDIKDYLQMSYATKSSLDLIENARTKKKHGSLYWLLDETKTAMGMRLLKTWIDRPLISKQAISERQNIVETFLESFIERSDLADSLKGVYDIERLSSRVSFGKVNPKDLLQLGHTLSQVPYIKAVLEAINSPHLSKVIATIDPIPELESLIHSAIDPDAPATISEGSIIKTGFDQRLDHYRKVMKEGTGWIADIEMKERQASGINNLKIDYNKKDGYYFHVTNSNLSLVPDHFFRKATLKNSERYGTAELAKIEGQMLEAREESAQLEYDIFMRIREKVETYIDRLQTLAKAIATVDVLQGLAYVAEKNHYVRPEFASQKVITIQNGRHAVVEKVMGVQEYIPNTIQFNQNTSIQLITGPNMSGKSTYMRQLALTVIMAQMGSYVAADYAKLPIFDAIFTRIGAADDLISGQSTFMVEMMEANQAIQRASHDSLIIFDELGRGTATYDGMALAQSIIEHIHNRIGAITLFATHYHELTSLSEELGHLKNVHVAILERDGEVTFLHKIAEGPADKSYGIHVAKIAGLPGSLLSRADNILKQLESHSKDFIIKDNSQQSEENEPLNLLTEETSSQDIINRLKEVDVMNMTPMEAMTVLFDLKKKIK</sequence>